<feature type="chain" id="PRO_0000273156" description="SKA complex subunit 1">
    <location>
        <begin position="1"/>
        <end position="254"/>
    </location>
</feature>
<feature type="region of interest" description="Disordered" evidence="3">
    <location>
        <begin position="88"/>
        <end position="129"/>
    </location>
</feature>
<feature type="region of interest" description="Flexiple loop that anchors MAPRE1" evidence="1">
    <location>
        <begin position="91"/>
        <end position="131"/>
    </location>
</feature>
<feature type="region of interest" description="Binds microtubules and protein phosphatase PP1 subunit PPP1CA" evidence="1">
    <location>
        <begin position="131"/>
        <end position="254"/>
    </location>
</feature>
<feature type="coiled-coil region" evidence="2">
    <location>
        <begin position="56"/>
        <end position="90"/>
    </location>
</feature>
<feature type="short sequence motif" description="Slightly degenerated SXLP motif; may mediate interaction with MAPRE1, targeting to microtubule plus ends, stabilization on kinetochores and is required for proper chromosome alignment to the metaphase plate" evidence="1">
    <location>
        <begin position="92"/>
        <end position="95"/>
    </location>
</feature>
<feature type="compositionally biased region" description="Basic and acidic residues" evidence="3">
    <location>
        <begin position="105"/>
        <end position="129"/>
    </location>
</feature>
<feature type="modified residue" description="Phosphothreonine" evidence="1">
    <location>
        <position position="156"/>
    </location>
</feature>
<feature type="modified residue" description="Phosphoserine" evidence="1">
    <location>
        <position position="241"/>
    </location>
</feature>
<feature type="sequence conflict" description="In Ref. 1; ABJ15827." evidence="5" ref="1">
    <original>D</original>
    <variation>E</variation>
    <location>
        <position position="7"/>
    </location>
</feature>
<feature type="sequence conflict" description="In Ref. 2; BAB28731." evidence="5" ref="2">
    <original>N</original>
    <variation>D</variation>
    <location>
        <position position="27"/>
    </location>
</feature>
<feature type="sequence conflict" description="In Ref. 1; ABJ15826/ABJ15827, 2; BAB32336/BAB24591/BAB28731/BAE43036 and 4; AAH19940." evidence="5" ref="1 2 4">
    <original>I</original>
    <variation>V</variation>
    <location>
        <position position="132"/>
    </location>
</feature>
<dbReference type="EMBL" id="DQ926863">
    <property type="protein sequence ID" value="ABJ15826.1"/>
    <property type="molecule type" value="mRNA"/>
</dbReference>
<dbReference type="EMBL" id="DQ926864">
    <property type="protein sequence ID" value="ABJ15827.1"/>
    <property type="molecule type" value="mRNA"/>
</dbReference>
<dbReference type="EMBL" id="AK006442">
    <property type="protein sequence ID" value="BAB24591.1"/>
    <property type="molecule type" value="mRNA"/>
</dbReference>
<dbReference type="EMBL" id="AK013233">
    <property type="protein sequence ID" value="BAB28731.1"/>
    <property type="molecule type" value="mRNA"/>
</dbReference>
<dbReference type="EMBL" id="AK021226">
    <property type="protein sequence ID" value="BAB32336.1"/>
    <property type="molecule type" value="mRNA"/>
</dbReference>
<dbReference type="EMBL" id="AK172500">
    <property type="protein sequence ID" value="BAE43036.1"/>
    <property type="molecule type" value="mRNA"/>
</dbReference>
<dbReference type="EMBL" id="BC019940">
    <property type="protein sequence ID" value="AAH19940.1"/>
    <property type="molecule type" value="mRNA"/>
</dbReference>
<dbReference type="CCDS" id="CCDS29341.1"/>
<dbReference type="RefSeq" id="NP_001157827.1">
    <property type="nucleotide sequence ID" value="NM_001164355.1"/>
</dbReference>
<dbReference type="RefSeq" id="NP_079857.3">
    <property type="nucleotide sequence ID" value="NM_025581.4"/>
</dbReference>
<dbReference type="SMR" id="Q9CPV1"/>
<dbReference type="BioGRID" id="211496">
    <property type="interactions" value="8"/>
</dbReference>
<dbReference type="ComplexPortal" id="CPX-5700">
    <property type="entry name" value="Kinetochore SKA complex"/>
</dbReference>
<dbReference type="FunCoup" id="Q9CPV1">
    <property type="interactions" value="373"/>
</dbReference>
<dbReference type="IntAct" id="Q9CPV1">
    <property type="interactions" value="5"/>
</dbReference>
<dbReference type="STRING" id="10090.ENSMUSP00000049156"/>
<dbReference type="PhosphoSitePlus" id="Q9CPV1"/>
<dbReference type="PaxDb" id="10090-ENSMUSP00000049156"/>
<dbReference type="PeptideAtlas" id="Q9CPV1"/>
<dbReference type="ProteomicsDB" id="257187"/>
<dbReference type="ProteomicsDB" id="334723"/>
<dbReference type="Pumba" id="Q9CPV1"/>
<dbReference type="Antibodypedia" id="22703">
    <property type="antibodies" value="92 antibodies from 22 providers"/>
</dbReference>
<dbReference type="DNASU" id="66468"/>
<dbReference type="Ensembl" id="ENSMUST00000040188.16">
    <property type="protein sequence ID" value="ENSMUSP00000049156.9"/>
    <property type="gene ID" value="ENSMUSG00000036223.17"/>
</dbReference>
<dbReference type="Ensembl" id="ENSMUST00000177604.2">
    <property type="protein sequence ID" value="ENSMUSP00000137357.2"/>
    <property type="gene ID" value="ENSMUSG00000036223.17"/>
</dbReference>
<dbReference type="GeneID" id="66468"/>
<dbReference type="KEGG" id="mmu:66468"/>
<dbReference type="UCSC" id="uc008fpe.2">
    <property type="organism name" value="mouse"/>
</dbReference>
<dbReference type="AGR" id="MGI:1913718"/>
<dbReference type="CTD" id="220134"/>
<dbReference type="MGI" id="MGI:1913718">
    <property type="gene designation" value="Ska1"/>
</dbReference>
<dbReference type="VEuPathDB" id="HostDB:ENSMUSG00000036223"/>
<dbReference type="eggNOG" id="KOG4832">
    <property type="taxonomic scope" value="Eukaryota"/>
</dbReference>
<dbReference type="GeneTree" id="ENSGT00390000011654"/>
<dbReference type="InParanoid" id="Q9CPV1"/>
<dbReference type="OMA" id="PTGMRED"/>
<dbReference type="OrthoDB" id="5962at2759"/>
<dbReference type="PhylomeDB" id="Q9CPV1"/>
<dbReference type="TreeFam" id="TF324442"/>
<dbReference type="Reactome" id="R-MMU-141444">
    <property type="pathway name" value="Amplification of signal from unattached kinetochores via a MAD2 inhibitory signal"/>
</dbReference>
<dbReference type="Reactome" id="R-MMU-2467813">
    <property type="pathway name" value="Separation of Sister Chromatids"/>
</dbReference>
<dbReference type="Reactome" id="R-MMU-2500257">
    <property type="pathway name" value="Resolution of Sister Chromatid Cohesion"/>
</dbReference>
<dbReference type="Reactome" id="R-MMU-5663220">
    <property type="pathway name" value="RHO GTPases Activate Formins"/>
</dbReference>
<dbReference type="Reactome" id="R-MMU-68877">
    <property type="pathway name" value="Mitotic Prometaphase"/>
</dbReference>
<dbReference type="Reactome" id="R-MMU-9648025">
    <property type="pathway name" value="EML4 and NUDC in mitotic spindle formation"/>
</dbReference>
<dbReference type="BioGRID-ORCS" id="66468">
    <property type="hits" value="19 hits in 78 CRISPR screens"/>
</dbReference>
<dbReference type="ChiTaRS" id="Ska1">
    <property type="organism name" value="mouse"/>
</dbReference>
<dbReference type="PRO" id="PR:Q9CPV1"/>
<dbReference type="Proteomes" id="UP000000589">
    <property type="component" value="Chromosome 18"/>
</dbReference>
<dbReference type="RNAct" id="Q9CPV1">
    <property type="molecule type" value="protein"/>
</dbReference>
<dbReference type="Bgee" id="ENSMUSG00000036223">
    <property type="expression patterns" value="Expressed in primary oocyte and 154 other cell types or tissues"/>
</dbReference>
<dbReference type="GO" id="GO:0005813">
    <property type="term" value="C:centrosome"/>
    <property type="evidence" value="ECO:0000250"/>
    <property type="project" value="UniProtKB"/>
</dbReference>
<dbReference type="GO" id="GO:0005737">
    <property type="term" value="C:cytoplasm"/>
    <property type="evidence" value="ECO:0007669"/>
    <property type="project" value="UniProtKB-KW"/>
</dbReference>
<dbReference type="GO" id="GO:0000776">
    <property type="term" value="C:kinetochore"/>
    <property type="evidence" value="ECO:0000303"/>
    <property type="project" value="ComplexPortal"/>
</dbReference>
<dbReference type="GO" id="GO:0072687">
    <property type="term" value="C:meiotic spindle"/>
    <property type="evidence" value="ECO:0000314"/>
    <property type="project" value="UniProtKB"/>
</dbReference>
<dbReference type="GO" id="GO:0005874">
    <property type="term" value="C:microtubule"/>
    <property type="evidence" value="ECO:0007669"/>
    <property type="project" value="UniProtKB-KW"/>
</dbReference>
<dbReference type="GO" id="GO:0072686">
    <property type="term" value="C:mitotic spindle"/>
    <property type="evidence" value="ECO:0000250"/>
    <property type="project" value="UniProtKB"/>
</dbReference>
<dbReference type="GO" id="GO:0000940">
    <property type="term" value="C:outer kinetochore"/>
    <property type="evidence" value="ECO:0000250"/>
    <property type="project" value="UniProtKB"/>
</dbReference>
<dbReference type="GO" id="GO:0008017">
    <property type="term" value="F:microtubule binding"/>
    <property type="evidence" value="ECO:0000250"/>
    <property type="project" value="UniProtKB"/>
</dbReference>
<dbReference type="GO" id="GO:0051315">
    <property type="term" value="P:attachment of mitotic spindle microtubules to kinetochore"/>
    <property type="evidence" value="ECO:0000250"/>
    <property type="project" value="UniProtKB"/>
</dbReference>
<dbReference type="GO" id="GO:0051301">
    <property type="term" value="P:cell division"/>
    <property type="evidence" value="ECO:0007669"/>
    <property type="project" value="UniProtKB-KW"/>
</dbReference>
<dbReference type="GO" id="GO:0051296">
    <property type="term" value="P:establishment of meiotic spindle orientation"/>
    <property type="evidence" value="ECO:0000315"/>
    <property type="project" value="UniProtKB"/>
</dbReference>
<dbReference type="GO" id="GO:0000278">
    <property type="term" value="P:mitotic cell cycle"/>
    <property type="evidence" value="ECO:0000250"/>
    <property type="project" value="UniProtKB"/>
</dbReference>
<dbReference type="GO" id="GO:0007080">
    <property type="term" value="P:mitotic metaphase chromosome alignment"/>
    <property type="evidence" value="ECO:0000250"/>
    <property type="project" value="UniProtKB"/>
</dbReference>
<dbReference type="GO" id="GO:0000070">
    <property type="term" value="P:mitotic sister chromatid segregation"/>
    <property type="evidence" value="ECO:0000250"/>
    <property type="project" value="UniProtKB"/>
</dbReference>
<dbReference type="GO" id="GO:0140499">
    <property type="term" value="P:negative regulation of mitotic spindle assembly checkpoint signaling"/>
    <property type="evidence" value="ECO:0000250"/>
    <property type="project" value="UniProtKB"/>
</dbReference>
<dbReference type="GO" id="GO:0031110">
    <property type="term" value="P:regulation of microtubule polymerization or depolymerization"/>
    <property type="evidence" value="ECO:0000250"/>
    <property type="project" value="UniProtKB"/>
</dbReference>
<dbReference type="GO" id="GO:0007056">
    <property type="term" value="P:spindle assembly involved in female meiosis"/>
    <property type="evidence" value="ECO:0000315"/>
    <property type="project" value="UniProtKB"/>
</dbReference>
<dbReference type="CDD" id="cd12958">
    <property type="entry name" value="SKA1_N"/>
    <property type="match status" value="1"/>
</dbReference>
<dbReference type="FunFam" id="1.10.10.1890:FF:000001">
    <property type="entry name" value="Spindle and kinetochore-associated protein 1"/>
    <property type="match status" value="1"/>
</dbReference>
<dbReference type="Gene3D" id="6.10.250.1370">
    <property type="match status" value="1"/>
</dbReference>
<dbReference type="Gene3D" id="1.10.10.1890">
    <property type="entry name" value="Ska1 microtubule binding domain-like"/>
    <property type="match status" value="1"/>
</dbReference>
<dbReference type="InterPro" id="IPR009829">
    <property type="entry name" value="SKA1"/>
</dbReference>
<dbReference type="InterPro" id="IPR042031">
    <property type="entry name" value="SKA1_MBD_sf"/>
</dbReference>
<dbReference type="PANTHER" id="PTHR28573">
    <property type="entry name" value="SPINDLE AND KINETOCHORE-ASSOCIATED PROTEIN 1"/>
    <property type="match status" value="1"/>
</dbReference>
<dbReference type="PANTHER" id="PTHR28573:SF1">
    <property type="entry name" value="SPINDLE AND KINETOCHORE-ASSOCIATED PROTEIN 1"/>
    <property type="match status" value="1"/>
</dbReference>
<dbReference type="Pfam" id="PF07160">
    <property type="entry name" value="SKA1"/>
    <property type="match status" value="1"/>
</dbReference>
<keyword id="KW-0131">Cell cycle</keyword>
<keyword id="KW-0132">Cell division</keyword>
<keyword id="KW-0137">Centromere</keyword>
<keyword id="KW-0158">Chromosome</keyword>
<keyword id="KW-0175">Coiled coil</keyword>
<keyword id="KW-0963">Cytoplasm</keyword>
<keyword id="KW-0206">Cytoskeleton</keyword>
<keyword id="KW-0995">Kinetochore</keyword>
<keyword id="KW-0493">Microtubule</keyword>
<keyword id="KW-0498">Mitosis</keyword>
<keyword id="KW-0597">Phosphoprotein</keyword>
<keyword id="KW-1185">Reference proteome</keyword>
<name>SKA1_MOUSE</name>
<evidence type="ECO:0000250" key="1">
    <source>
        <dbReference type="UniProtKB" id="Q96BD8"/>
    </source>
</evidence>
<evidence type="ECO:0000255" key="2"/>
<evidence type="ECO:0000256" key="3">
    <source>
        <dbReference type="SAM" id="MobiDB-lite"/>
    </source>
</evidence>
<evidence type="ECO:0000269" key="4">
    <source>
    </source>
</evidence>
<evidence type="ECO:0000305" key="5"/>
<evidence type="ECO:0000312" key="6">
    <source>
        <dbReference type="Proteomes" id="UP000000589"/>
    </source>
</evidence>
<comment type="function">
    <text evidence="1 4">Component of the SKA complex, a microtubule plus end-binding complex of the outer kinetochore that stabilizes spindle microtubule-kinetochore attachments, promotes alignment of chromosomes at the mitotic spindle equator (chromosome congression) and assists suppression of the spindle assembly checkpoint (By similarity). Kinetochores, consisting of a centromere-associated inner segment and a microtubule-contacting outer segment, play a crucial role in chromosome segregation by mediating the physical connection between centromeric DNA and spindle microtubules (By similarity). The outer kinetochore is made up of the ten-subunit KMN network complex, comprising the MIS12, NDC80 and KNL1 complexes, and auxiliary microtubule-associated components such as the SKA complex; together they connect the outer kinetochore with the inner kinetochore, bind microtubules, and mediate interactions with mitotic checkpoint proteins that delay anaphase until chromosomes are bioriented on the spindle (By similarity). The SKA complex is loaded onto bioriented kinetochores and it facilitates chromosome congression by stabilizing microtubules together with MAPRE1, and end-on attachment of the NDC80 complex to depolymerizing spindle microtubules, thereby assisting the poleward-moving kinetochore in withstanding microtubule pulling forces (By similarity). The complex associates with dynamic microtubule plus-ends and can track both depolymerizing and elongating microtubules (By similarity). The complex recruits protein phosphatase 1 (PP1) to the kinetochore in prometaphase and metaphase, to oppose spindle assembly checkpoint signaling and promote the onset of anaphase (By similarity). In the complex, it mediates interactions with microtubules (By similarity). It also stimulates AURKB/Aurora B catalytic activity (By similarity). During meiosis the SKA complex stabilizes the meiotic spindle and is required for its migration to the cortex (PubMed:22336914).</text>
</comment>
<comment type="subunit">
    <text evidence="1">Component of the SKA complex, composed of SKA1, SKA2 and SKA3. The SKA complex is a homodimer organized around a central W-shaped coiled-coil structure, formed by the interacting domains of SKA1, SKA2, and SKA3, each end of the 'W' is extended further by the C-terminal microtubule-binding domains of SKA1 and SKA3; the complex forms extended structures on microtubules. Interacts (via SXLP motif) with MAPRE1 (via C-terminus); the interaction is direct and stabilizes the kinetochore-microtubule attachment of the SKA1 complex. Interacts (via C-terminus) with protein phosphatase PP1 subunit PPP1CA; the interaction is direct and required for recruitment of PPP1CA to the kinetochore. Interacts with the NDC80 complex; the interaction is required to establish kinetochore-microtubule end-on attachments.</text>
</comment>
<comment type="subcellular location">
    <subcellularLocation>
        <location evidence="4">Cytoplasm</location>
        <location evidence="4">Cytoskeleton</location>
        <location evidence="4">Spindle</location>
    </subcellularLocation>
    <subcellularLocation>
        <location evidence="1">Chromosome</location>
        <location evidence="1">Centromere</location>
        <location evidence="1">Kinetochore</location>
    </subcellularLocation>
    <subcellularLocation>
        <location evidence="1">Cytoplasm</location>
        <location evidence="1">Cytoskeleton</location>
        <location evidence="1">Microtubule organizing center</location>
        <location evidence="1">Centrosome</location>
    </subcellularLocation>
    <text evidence="1 4">Localizes to bioriented kinetochores and spindle microtubules during metaphase in a NDC80 complex-dependent manner (By similarity). The SKA complex begins to concentrate at kinetochores before microtubule attachment but reaches maximum levels on bioriented metaphase chromosomes (By similarity). Localizes both to microtubule plus-ends and along the length of microtubules (By similarity). The localization of the SKA complex to kinetochores is positively regulated by kinase CDK1 (By similarity). The localization of the SKA complex to kinetochores is negatively regulated by protein serine/threonine kinase AURKB, and this action is opposed directly or indirectly by the PP1 and PP2A protein phosphatase complexes (By similarity). Localizes at the centrosome during interphase and prophase (By similarity). Localizes to the meiotic spindle, but not to kinetochores, from the stage of germinal vesicle breakdown (GVBD) to meiosis II (MII) (PubMed:22336914).</text>
</comment>
<comment type="developmental stage">
    <text evidence="4">Expressed at a constant level in germinal vesicle (GV) stage oocytes, MI-stage oocytes, and MII-stage oocytes.</text>
</comment>
<comment type="similarity">
    <text evidence="5">Belongs to the SKA1 family.</text>
</comment>
<accession>Q9CPV1</accession>
<accession>A0A0R4J0M5</accession>
<accession>Q005W7</accession>
<accession>Q8VE34</accession>
<accession>Q9CYW9</accession>
<gene>
    <name type="primary">Ska1</name>
</gene>
<organism>
    <name type="scientific">Mus musculus</name>
    <name type="common">Mouse</name>
    <dbReference type="NCBI Taxonomy" id="10090"/>
    <lineage>
        <taxon>Eukaryota</taxon>
        <taxon>Metazoa</taxon>
        <taxon>Chordata</taxon>
        <taxon>Craniata</taxon>
        <taxon>Vertebrata</taxon>
        <taxon>Euteleostomi</taxon>
        <taxon>Mammalia</taxon>
        <taxon>Eutheria</taxon>
        <taxon>Euarchontoglires</taxon>
        <taxon>Glires</taxon>
        <taxon>Rodentia</taxon>
        <taxon>Myomorpha</taxon>
        <taxon>Muroidea</taxon>
        <taxon>Muridae</taxon>
        <taxon>Murinae</taxon>
        <taxon>Mus</taxon>
        <taxon>Mus</taxon>
    </lineage>
</organism>
<sequence>MDSELEDLCSYVNEKIGNIKKILSIRNLGQDPALKTTLSKIGDEIIAVNELLNKFELEIQYQEQTNSSLKELCESLREECEDVEHLKEHVPPHLPQVTATQSLVHKPEPDPKESDKAEEPGLPKKPPREQRIIKEMQFITMDEFSDVPAYMKSRLTYCQINDIIKEINKAVVSKYKIMHQPKASMSSVKRNLYQRFINEETKDTKGHHFIVEADIKEFTALKVDKRFYVIMHILRHCHRLSEVRGGGLTRYVIT</sequence>
<reference key="1">
    <citation type="submission" date="2006-08" db="EMBL/GenBank/DDBJ databases">
        <title>Deletion in chromosome 18 is associated with no turning mutation.</title>
        <authorList>
            <person name="Chatterjee B."/>
            <person name="Richard K."/>
            <person name="Bucan M."/>
            <person name="Lo C."/>
        </authorList>
    </citation>
    <scope>NUCLEOTIDE SEQUENCE [MRNA]</scope>
    <source>
        <strain>CD-1</strain>
    </source>
</reference>
<reference key="2">
    <citation type="journal article" date="2005" name="Science">
        <title>The transcriptional landscape of the mammalian genome.</title>
        <authorList>
            <person name="Carninci P."/>
            <person name="Kasukawa T."/>
            <person name="Katayama S."/>
            <person name="Gough J."/>
            <person name="Frith M.C."/>
            <person name="Maeda N."/>
            <person name="Oyama R."/>
            <person name="Ravasi T."/>
            <person name="Lenhard B."/>
            <person name="Wells C."/>
            <person name="Kodzius R."/>
            <person name="Shimokawa K."/>
            <person name="Bajic V.B."/>
            <person name="Brenner S.E."/>
            <person name="Batalov S."/>
            <person name="Forrest A.R."/>
            <person name="Zavolan M."/>
            <person name="Davis M.J."/>
            <person name="Wilming L.G."/>
            <person name="Aidinis V."/>
            <person name="Allen J.E."/>
            <person name="Ambesi-Impiombato A."/>
            <person name="Apweiler R."/>
            <person name="Aturaliya R.N."/>
            <person name="Bailey T.L."/>
            <person name="Bansal M."/>
            <person name="Baxter L."/>
            <person name="Beisel K.W."/>
            <person name="Bersano T."/>
            <person name="Bono H."/>
            <person name="Chalk A.M."/>
            <person name="Chiu K.P."/>
            <person name="Choudhary V."/>
            <person name="Christoffels A."/>
            <person name="Clutterbuck D.R."/>
            <person name="Crowe M.L."/>
            <person name="Dalla E."/>
            <person name="Dalrymple B.P."/>
            <person name="de Bono B."/>
            <person name="Della Gatta G."/>
            <person name="di Bernardo D."/>
            <person name="Down T."/>
            <person name="Engstrom P."/>
            <person name="Fagiolini M."/>
            <person name="Faulkner G."/>
            <person name="Fletcher C.F."/>
            <person name="Fukushima T."/>
            <person name="Furuno M."/>
            <person name="Futaki S."/>
            <person name="Gariboldi M."/>
            <person name="Georgii-Hemming P."/>
            <person name="Gingeras T.R."/>
            <person name="Gojobori T."/>
            <person name="Green R.E."/>
            <person name="Gustincich S."/>
            <person name="Harbers M."/>
            <person name="Hayashi Y."/>
            <person name="Hensch T.K."/>
            <person name="Hirokawa N."/>
            <person name="Hill D."/>
            <person name="Huminiecki L."/>
            <person name="Iacono M."/>
            <person name="Ikeo K."/>
            <person name="Iwama A."/>
            <person name="Ishikawa T."/>
            <person name="Jakt M."/>
            <person name="Kanapin A."/>
            <person name="Katoh M."/>
            <person name="Kawasawa Y."/>
            <person name="Kelso J."/>
            <person name="Kitamura H."/>
            <person name="Kitano H."/>
            <person name="Kollias G."/>
            <person name="Krishnan S.P."/>
            <person name="Kruger A."/>
            <person name="Kummerfeld S.K."/>
            <person name="Kurochkin I.V."/>
            <person name="Lareau L.F."/>
            <person name="Lazarevic D."/>
            <person name="Lipovich L."/>
            <person name="Liu J."/>
            <person name="Liuni S."/>
            <person name="McWilliam S."/>
            <person name="Madan Babu M."/>
            <person name="Madera M."/>
            <person name="Marchionni L."/>
            <person name="Matsuda H."/>
            <person name="Matsuzawa S."/>
            <person name="Miki H."/>
            <person name="Mignone F."/>
            <person name="Miyake S."/>
            <person name="Morris K."/>
            <person name="Mottagui-Tabar S."/>
            <person name="Mulder N."/>
            <person name="Nakano N."/>
            <person name="Nakauchi H."/>
            <person name="Ng P."/>
            <person name="Nilsson R."/>
            <person name="Nishiguchi S."/>
            <person name="Nishikawa S."/>
            <person name="Nori F."/>
            <person name="Ohara O."/>
            <person name="Okazaki Y."/>
            <person name="Orlando V."/>
            <person name="Pang K.C."/>
            <person name="Pavan W.J."/>
            <person name="Pavesi G."/>
            <person name="Pesole G."/>
            <person name="Petrovsky N."/>
            <person name="Piazza S."/>
            <person name="Reed J."/>
            <person name="Reid J.F."/>
            <person name="Ring B.Z."/>
            <person name="Ringwald M."/>
            <person name="Rost B."/>
            <person name="Ruan Y."/>
            <person name="Salzberg S.L."/>
            <person name="Sandelin A."/>
            <person name="Schneider C."/>
            <person name="Schoenbach C."/>
            <person name="Sekiguchi K."/>
            <person name="Semple C.A."/>
            <person name="Seno S."/>
            <person name="Sessa L."/>
            <person name="Sheng Y."/>
            <person name="Shibata Y."/>
            <person name="Shimada H."/>
            <person name="Shimada K."/>
            <person name="Silva D."/>
            <person name="Sinclair B."/>
            <person name="Sperling S."/>
            <person name="Stupka E."/>
            <person name="Sugiura K."/>
            <person name="Sultana R."/>
            <person name="Takenaka Y."/>
            <person name="Taki K."/>
            <person name="Tammoja K."/>
            <person name="Tan S.L."/>
            <person name="Tang S."/>
            <person name="Taylor M.S."/>
            <person name="Tegner J."/>
            <person name="Teichmann S.A."/>
            <person name="Ueda H.R."/>
            <person name="van Nimwegen E."/>
            <person name="Verardo R."/>
            <person name="Wei C.L."/>
            <person name="Yagi K."/>
            <person name="Yamanishi H."/>
            <person name="Zabarovsky E."/>
            <person name="Zhu S."/>
            <person name="Zimmer A."/>
            <person name="Hide W."/>
            <person name="Bult C."/>
            <person name="Grimmond S.M."/>
            <person name="Teasdale R.D."/>
            <person name="Liu E.T."/>
            <person name="Brusic V."/>
            <person name="Quackenbush J."/>
            <person name="Wahlestedt C."/>
            <person name="Mattick J.S."/>
            <person name="Hume D.A."/>
            <person name="Kai C."/>
            <person name="Sasaki D."/>
            <person name="Tomaru Y."/>
            <person name="Fukuda S."/>
            <person name="Kanamori-Katayama M."/>
            <person name="Suzuki M."/>
            <person name="Aoki J."/>
            <person name="Arakawa T."/>
            <person name="Iida J."/>
            <person name="Imamura K."/>
            <person name="Itoh M."/>
            <person name="Kato T."/>
            <person name="Kawaji H."/>
            <person name="Kawagashira N."/>
            <person name="Kawashima T."/>
            <person name="Kojima M."/>
            <person name="Kondo S."/>
            <person name="Konno H."/>
            <person name="Nakano K."/>
            <person name="Ninomiya N."/>
            <person name="Nishio T."/>
            <person name="Okada M."/>
            <person name="Plessy C."/>
            <person name="Shibata K."/>
            <person name="Shiraki T."/>
            <person name="Suzuki S."/>
            <person name="Tagami M."/>
            <person name="Waki K."/>
            <person name="Watahiki A."/>
            <person name="Okamura-Oho Y."/>
            <person name="Suzuki H."/>
            <person name="Kawai J."/>
            <person name="Hayashizaki Y."/>
        </authorList>
    </citation>
    <scope>NUCLEOTIDE SEQUENCE [LARGE SCALE MRNA]</scope>
    <source>
        <strain>C57BL/6J</strain>
        <strain>NOD</strain>
        <tissue>Spleen</tissue>
        <tissue>Testis</tissue>
    </source>
</reference>
<reference evidence="6" key="3">
    <citation type="journal article" date="2009" name="PLoS Biol.">
        <title>Lineage-specific biology revealed by a finished genome assembly of the mouse.</title>
        <authorList>
            <person name="Church D.M."/>
            <person name="Goodstadt L."/>
            <person name="Hillier L.W."/>
            <person name="Zody M.C."/>
            <person name="Goldstein S."/>
            <person name="She X."/>
            <person name="Bult C.J."/>
            <person name="Agarwala R."/>
            <person name="Cherry J.L."/>
            <person name="DiCuccio M."/>
            <person name="Hlavina W."/>
            <person name="Kapustin Y."/>
            <person name="Meric P."/>
            <person name="Maglott D."/>
            <person name="Birtle Z."/>
            <person name="Marques A.C."/>
            <person name="Graves T."/>
            <person name="Zhou S."/>
            <person name="Teague B."/>
            <person name="Potamousis K."/>
            <person name="Churas C."/>
            <person name="Place M."/>
            <person name="Herschleb J."/>
            <person name="Runnheim R."/>
            <person name="Forrest D."/>
            <person name="Amos-Landgraf J."/>
            <person name="Schwartz D.C."/>
            <person name="Cheng Z."/>
            <person name="Lindblad-Toh K."/>
            <person name="Eichler E.E."/>
            <person name="Ponting C.P."/>
        </authorList>
    </citation>
    <scope>NUCLEOTIDE SEQUENCE [LARGE SCALE GENOMIC DNA]</scope>
    <source>
        <strain evidence="6">C57BL/6J</strain>
    </source>
</reference>
<reference key="4">
    <citation type="journal article" date="2004" name="Genome Res.">
        <title>The status, quality, and expansion of the NIH full-length cDNA project: the Mammalian Gene Collection (MGC).</title>
        <authorList>
            <consortium name="The MGC Project Team"/>
        </authorList>
    </citation>
    <scope>NUCLEOTIDE SEQUENCE [LARGE SCALE MRNA]</scope>
    <source>
        <strain>FVB/N</strain>
        <tissue>Mammary tumor</tissue>
    </source>
</reference>
<reference key="5">
    <citation type="journal article" date="2012" name="Cell Cycle">
        <title>Localization and function of the Ska complex during mouse oocyte meiotic maturation.</title>
        <authorList>
            <person name="Zhang Q.H."/>
            <person name="Qi S.T."/>
            <person name="Wang Z.B."/>
            <person name="Yang C.R."/>
            <person name="Wei Y.C."/>
            <person name="Chen L."/>
            <person name="Ouyang Y.C."/>
            <person name="Hou Y."/>
            <person name="Schatten H."/>
            <person name="Sun Q.Y."/>
        </authorList>
    </citation>
    <scope>FUNCTION</scope>
    <scope>SUBCELLULAR LOCATION</scope>
    <scope>DEVELOPMENTAL STAGE</scope>
</reference>
<protein>
    <recommendedName>
        <fullName evidence="5">SKA complex subunit 1</fullName>
    </recommendedName>
    <alternativeName>
        <fullName>Spindle and kinetochore-associated protein 1</fullName>
    </alternativeName>
</protein>
<proteinExistence type="evidence at transcript level"/>